<organism>
    <name type="scientific">Renibacterium salmoninarum (strain ATCC 33209 / DSM 20767 / JCM 11484 / NBRC 15589 / NCIMB 2235)</name>
    <dbReference type="NCBI Taxonomy" id="288705"/>
    <lineage>
        <taxon>Bacteria</taxon>
        <taxon>Bacillati</taxon>
        <taxon>Actinomycetota</taxon>
        <taxon>Actinomycetes</taxon>
        <taxon>Micrococcales</taxon>
        <taxon>Micrococcaceae</taxon>
        <taxon>Renibacterium</taxon>
    </lineage>
</organism>
<proteinExistence type="inferred from homology"/>
<keyword id="KW-0068">Autocatalytic cleavage</keyword>
<keyword id="KW-0963">Cytoplasm</keyword>
<keyword id="KW-0210">Decarboxylase</keyword>
<keyword id="KW-0456">Lyase</keyword>
<keyword id="KW-0566">Pantothenate biosynthesis</keyword>
<keyword id="KW-0670">Pyruvate</keyword>
<keyword id="KW-1185">Reference proteome</keyword>
<keyword id="KW-0704">Schiff base</keyword>
<keyword id="KW-0865">Zymogen</keyword>
<protein>
    <recommendedName>
        <fullName evidence="1">Aspartate 1-decarboxylase</fullName>
        <ecNumber evidence="1">4.1.1.11</ecNumber>
    </recommendedName>
    <alternativeName>
        <fullName evidence="1">Aspartate alpha-decarboxylase</fullName>
    </alternativeName>
    <component>
        <recommendedName>
            <fullName evidence="1">Aspartate 1-decarboxylase beta chain</fullName>
        </recommendedName>
    </component>
    <component>
        <recommendedName>
            <fullName evidence="1">Aspartate 1-decarboxylase alpha chain</fullName>
        </recommendedName>
    </component>
</protein>
<comment type="function">
    <text evidence="1">Catalyzes the pyruvoyl-dependent decarboxylation of aspartate to produce beta-alanine.</text>
</comment>
<comment type="catalytic activity">
    <reaction evidence="1">
        <text>L-aspartate + H(+) = beta-alanine + CO2</text>
        <dbReference type="Rhea" id="RHEA:19497"/>
        <dbReference type="ChEBI" id="CHEBI:15378"/>
        <dbReference type="ChEBI" id="CHEBI:16526"/>
        <dbReference type="ChEBI" id="CHEBI:29991"/>
        <dbReference type="ChEBI" id="CHEBI:57966"/>
        <dbReference type="EC" id="4.1.1.11"/>
    </reaction>
</comment>
<comment type="cofactor">
    <cofactor evidence="1">
        <name>pyruvate</name>
        <dbReference type="ChEBI" id="CHEBI:15361"/>
    </cofactor>
    <text evidence="1">Binds 1 pyruvoyl group covalently per subunit.</text>
</comment>
<comment type="pathway">
    <text evidence="1">Cofactor biosynthesis; (R)-pantothenate biosynthesis; beta-alanine from L-aspartate: step 1/1.</text>
</comment>
<comment type="subunit">
    <text evidence="1">Heterooctamer of four alpha and four beta subunits.</text>
</comment>
<comment type="subcellular location">
    <subcellularLocation>
        <location evidence="1">Cytoplasm</location>
    </subcellularLocation>
</comment>
<comment type="PTM">
    <text evidence="1">Is synthesized initially as an inactive proenzyme, which is activated by self-cleavage at a specific serine bond to produce a beta-subunit with a hydroxyl group at its C-terminus and an alpha-subunit with a pyruvoyl group at its N-terminus.</text>
</comment>
<comment type="similarity">
    <text evidence="1">Belongs to the PanD family.</text>
</comment>
<dbReference type="EC" id="4.1.1.11" evidence="1"/>
<dbReference type="EMBL" id="CP000910">
    <property type="protein sequence ID" value="ABY23957.1"/>
    <property type="molecule type" value="Genomic_DNA"/>
</dbReference>
<dbReference type="RefSeq" id="WP_012245623.1">
    <property type="nucleotide sequence ID" value="NC_010168.1"/>
</dbReference>
<dbReference type="SMR" id="A9WT19"/>
<dbReference type="STRING" id="288705.RSal33209_2226"/>
<dbReference type="KEGG" id="rsa:RSal33209_2226"/>
<dbReference type="eggNOG" id="COG0853">
    <property type="taxonomic scope" value="Bacteria"/>
</dbReference>
<dbReference type="HOGENOM" id="CLU_115305_2_0_11"/>
<dbReference type="UniPathway" id="UPA00028">
    <property type="reaction ID" value="UER00002"/>
</dbReference>
<dbReference type="Proteomes" id="UP000002007">
    <property type="component" value="Chromosome"/>
</dbReference>
<dbReference type="GO" id="GO:0005829">
    <property type="term" value="C:cytosol"/>
    <property type="evidence" value="ECO:0007669"/>
    <property type="project" value="TreeGrafter"/>
</dbReference>
<dbReference type="GO" id="GO:0004068">
    <property type="term" value="F:aspartate 1-decarboxylase activity"/>
    <property type="evidence" value="ECO:0007669"/>
    <property type="project" value="UniProtKB-UniRule"/>
</dbReference>
<dbReference type="GO" id="GO:0006523">
    <property type="term" value="P:alanine biosynthetic process"/>
    <property type="evidence" value="ECO:0007669"/>
    <property type="project" value="InterPro"/>
</dbReference>
<dbReference type="GO" id="GO:0015940">
    <property type="term" value="P:pantothenate biosynthetic process"/>
    <property type="evidence" value="ECO:0007669"/>
    <property type="project" value="UniProtKB-UniRule"/>
</dbReference>
<dbReference type="CDD" id="cd06919">
    <property type="entry name" value="Asp_decarbox"/>
    <property type="match status" value="1"/>
</dbReference>
<dbReference type="Gene3D" id="2.40.40.20">
    <property type="match status" value="1"/>
</dbReference>
<dbReference type="HAMAP" id="MF_00446">
    <property type="entry name" value="PanD"/>
    <property type="match status" value="1"/>
</dbReference>
<dbReference type="InterPro" id="IPR009010">
    <property type="entry name" value="Asp_de-COase-like_dom_sf"/>
</dbReference>
<dbReference type="InterPro" id="IPR003190">
    <property type="entry name" value="Asp_decarbox"/>
</dbReference>
<dbReference type="NCBIfam" id="TIGR00223">
    <property type="entry name" value="panD"/>
    <property type="match status" value="1"/>
</dbReference>
<dbReference type="PANTHER" id="PTHR21012">
    <property type="entry name" value="ASPARTATE 1-DECARBOXYLASE"/>
    <property type="match status" value="1"/>
</dbReference>
<dbReference type="PANTHER" id="PTHR21012:SF0">
    <property type="entry name" value="ASPARTATE 1-DECARBOXYLASE"/>
    <property type="match status" value="1"/>
</dbReference>
<dbReference type="Pfam" id="PF02261">
    <property type="entry name" value="Asp_decarbox"/>
    <property type="match status" value="1"/>
</dbReference>
<dbReference type="PIRSF" id="PIRSF006246">
    <property type="entry name" value="Asp_decarbox"/>
    <property type="match status" value="1"/>
</dbReference>
<dbReference type="SUPFAM" id="SSF50692">
    <property type="entry name" value="ADC-like"/>
    <property type="match status" value="1"/>
</dbReference>
<gene>
    <name evidence="1" type="primary">panD</name>
    <name type="ordered locus">RSal33209_2226</name>
</gene>
<sequence>MIRTMFKSKIHRATVTHANLHYVGSVTVDKDLLDAADILPGELVAIVDVTNGSRLETYTIEGQAGSGVIGINGAAAHLVNIGDTVILISYAQMTTAEAREYLPSIVHVDAANKIVQLGTDPAEALTEGLNRPPFSTTA</sequence>
<reference key="1">
    <citation type="journal article" date="2008" name="J. Bacteriol.">
        <title>Genome sequence of the fish pathogen Renibacterium salmoninarum suggests reductive evolution away from an environmental Arthrobacter ancestor.</title>
        <authorList>
            <person name="Wiens G.D."/>
            <person name="Rockey D.D."/>
            <person name="Wu Z."/>
            <person name="Chang J."/>
            <person name="Levy R."/>
            <person name="Crane S."/>
            <person name="Chen D.S."/>
            <person name="Capri G.R."/>
            <person name="Burnett J.R."/>
            <person name="Sudheesh P.S."/>
            <person name="Schipma M.J."/>
            <person name="Burd H."/>
            <person name="Bhattacharyya A."/>
            <person name="Rhodes L.D."/>
            <person name="Kaul R."/>
            <person name="Strom M.S."/>
        </authorList>
    </citation>
    <scope>NUCLEOTIDE SEQUENCE [LARGE SCALE GENOMIC DNA]</scope>
    <source>
        <strain>ATCC 33209 / DSM 20767 / JCM 11484 / NBRC 15589 / NCIMB 2235</strain>
    </source>
</reference>
<evidence type="ECO:0000255" key="1">
    <source>
        <dbReference type="HAMAP-Rule" id="MF_00446"/>
    </source>
</evidence>
<name>PAND_RENSM</name>
<feature type="chain" id="PRO_1000080934" description="Aspartate 1-decarboxylase beta chain" evidence="1">
    <location>
        <begin position="1"/>
        <end position="24"/>
    </location>
</feature>
<feature type="chain" id="PRO_1000080935" description="Aspartate 1-decarboxylase alpha chain" evidence="1">
    <location>
        <begin position="25"/>
        <end position="138"/>
    </location>
</feature>
<feature type="active site" description="Schiff-base intermediate with substrate; via pyruvic acid" evidence="1">
    <location>
        <position position="25"/>
    </location>
</feature>
<feature type="active site" description="Proton donor" evidence="1">
    <location>
        <position position="58"/>
    </location>
</feature>
<feature type="binding site" evidence="1">
    <location>
        <position position="57"/>
    </location>
    <ligand>
        <name>substrate</name>
    </ligand>
</feature>
<feature type="binding site" evidence="1">
    <location>
        <begin position="73"/>
        <end position="75"/>
    </location>
    <ligand>
        <name>substrate</name>
    </ligand>
</feature>
<feature type="modified residue" description="Pyruvic acid (Ser)" evidence="1">
    <location>
        <position position="25"/>
    </location>
</feature>
<accession>A9WT19</accession>